<protein>
    <recommendedName>
        <fullName evidence="1">Nucleoid-associated protein Mpe_A2533</fullName>
    </recommendedName>
</protein>
<organism>
    <name type="scientific">Methylibium petroleiphilum (strain ATCC BAA-1232 / LMG 22953 / PM1)</name>
    <dbReference type="NCBI Taxonomy" id="420662"/>
    <lineage>
        <taxon>Bacteria</taxon>
        <taxon>Pseudomonadati</taxon>
        <taxon>Pseudomonadota</taxon>
        <taxon>Betaproteobacteria</taxon>
        <taxon>Burkholderiales</taxon>
        <taxon>Sphaerotilaceae</taxon>
        <taxon>Methylibium</taxon>
    </lineage>
</organism>
<sequence length="108" mass="11594">MLKGQLAGLMKQAQAMQDNLKKAQDELALIEVEGQSGAGLVKVLMTCKHDVKRITIDPSLLADDKDMLEDLVAAAFNDAVRRAAATSEEKMGKLTAGMPLPPGMKLPF</sequence>
<comment type="function">
    <text evidence="1">Binds to DNA and alters its conformation. May be involved in regulation of gene expression, nucleoid organization and DNA protection.</text>
</comment>
<comment type="subunit">
    <text evidence="1">Homodimer.</text>
</comment>
<comment type="subcellular location">
    <subcellularLocation>
        <location evidence="1">Cytoplasm</location>
        <location evidence="1">Nucleoid</location>
    </subcellularLocation>
</comment>
<comment type="similarity">
    <text evidence="1">Belongs to the YbaB/EbfC family.</text>
</comment>
<name>Y2533_METPP</name>
<accession>A2SIU9</accession>
<dbReference type="EMBL" id="CP000555">
    <property type="protein sequence ID" value="ABM95488.1"/>
    <property type="molecule type" value="Genomic_DNA"/>
</dbReference>
<dbReference type="RefSeq" id="WP_011830121.1">
    <property type="nucleotide sequence ID" value="NC_008825.1"/>
</dbReference>
<dbReference type="SMR" id="A2SIU9"/>
<dbReference type="STRING" id="420662.Mpe_A2533"/>
<dbReference type="KEGG" id="mpt:Mpe_A2533"/>
<dbReference type="eggNOG" id="COG0718">
    <property type="taxonomic scope" value="Bacteria"/>
</dbReference>
<dbReference type="HOGENOM" id="CLU_140930_0_0_4"/>
<dbReference type="Proteomes" id="UP000000366">
    <property type="component" value="Chromosome"/>
</dbReference>
<dbReference type="GO" id="GO:0043590">
    <property type="term" value="C:bacterial nucleoid"/>
    <property type="evidence" value="ECO:0007669"/>
    <property type="project" value="UniProtKB-UniRule"/>
</dbReference>
<dbReference type="GO" id="GO:0005829">
    <property type="term" value="C:cytosol"/>
    <property type="evidence" value="ECO:0007669"/>
    <property type="project" value="TreeGrafter"/>
</dbReference>
<dbReference type="GO" id="GO:0003677">
    <property type="term" value="F:DNA binding"/>
    <property type="evidence" value="ECO:0007669"/>
    <property type="project" value="UniProtKB-UniRule"/>
</dbReference>
<dbReference type="Gene3D" id="3.30.1310.10">
    <property type="entry name" value="Nucleoid-associated protein YbaB-like domain"/>
    <property type="match status" value="1"/>
</dbReference>
<dbReference type="HAMAP" id="MF_00274">
    <property type="entry name" value="DNA_YbaB_EbfC"/>
    <property type="match status" value="1"/>
</dbReference>
<dbReference type="InterPro" id="IPR036894">
    <property type="entry name" value="YbaB-like_sf"/>
</dbReference>
<dbReference type="InterPro" id="IPR004401">
    <property type="entry name" value="YbaB/EbfC"/>
</dbReference>
<dbReference type="NCBIfam" id="TIGR00103">
    <property type="entry name" value="DNA_YbaB_EbfC"/>
    <property type="match status" value="1"/>
</dbReference>
<dbReference type="PANTHER" id="PTHR33449">
    <property type="entry name" value="NUCLEOID-ASSOCIATED PROTEIN YBAB"/>
    <property type="match status" value="1"/>
</dbReference>
<dbReference type="PANTHER" id="PTHR33449:SF1">
    <property type="entry name" value="NUCLEOID-ASSOCIATED PROTEIN YBAB"/>
    <property type="match status" value="1"/>
</dbReference>
<dbReference type="Pfam" id="PF02575">
    <property type="entry name" value="YbaB_DNA_bd"/>
    <property type="match status" value="1"/>
</dbReference>
<dbReference type="PIRSF" id="PIRSF004555">
    <property type="entry name" value="UCP004555"/>
    <property type="match status" value="1"/>
</dbReference>
<dbReference type="SUPFAM" id="SSF82607">
    <property type="entry name" value="YbaB-like"/>
    <property type="match status" value="1"/>
</dbReference>
<reference key="1">
    <citation type="journal article" date="2007" name="J. Bacteriol.">
        <title>Whole-genome analysis of the methyl tert-butyl ether-degrading beta-proteobacterium Methylibium petroleiphilum PM1.</title>
        <authorList>
            <person name="Kane S.R."/>
            <person name="Chakicherla A.Y."/>
            <person name="Chain P.S.G."/>
            <person name="Schmidt R."/>
            <person name="Shin M.W."/>
            <person name="Legler T.C."/>
            <person name="Scow K.M."/>
            <person name="Larimer F.W."/>
            <person name="Lucas S.M."/>
            <person name="Richardson P.M."/>
            <person name="Hristova K.R."/>
        </authorList>
    </citation>
    <scope>NUCLEOTIDE SEQUENCE [LARGE SCALE GENOMIC DNA]</scope>
    <source>
        <strain>ATCC BAA-1232 / LMG 22953 / PM1</strain>
    </source>
</reference>
<proteinExistence type="inferred from homology"/>
<evidence type="ECO:0000255" key="1">
    <source>
        <dbReference type="HAMAP-Rule" id="MF_00274"/>
    </source>
</evidence>
<evidence type="ECO:0000256" key="2">
    <source>
        <dbReference type="SAM" id="MobiDB-lite"/>
    </source>
</evidence>
<keyword id="KW-0963">Cytoplasm</keyword>
<keyword id="KW-0238">DNA-binding</keyword>
<keyword id="KW-1185">Reference proteome</keyword>
<gene>
    <name type="ordered locus">Mpe_A2533</name>
</gene>
<feature type="chain" id="PRO_1000003771" description="Nucleoid-associated protein Mpe_A2533">
    <location>
        <begin position="1"/>
        <end position="108"/>
    </location>
</feature>
<feature type="region of interest" description="Disordered" evidence="2">
    <location>
        <begin position="86"/>
        <end position="108"/>
    </location>
</feature>
<feature type="compositionally biased region" description="Pro residues" evidence="2">
    <location>
        <begin position="99"/>
        <end position="108"/>
    </location>
</feature>